<feature type="chain" id="PRO_0000205623" description="Tropomyosin alpha-1 chain">
    <location>
        <begin position="1"/>
        <end position="284"/>
    </location>
</feature>
<feature type="region of interest" description="Disordered" evidence="6">
    <location>
        <begin position="1"/>
        <end position="38"/>
    </location>
</feature>
<feature type="region of interest" description="Disordered" evidence="6">
    <location>
        <begin position="116"/>
        <end position="136"/>
    </location>
</feature>
<feature type="coiled-coil region" evidence="1">
    <location>
        <begin position="1"/>
        <end position="284"/>
    </location>
</feature>
<feature type="compositionally biased region" description="Basic and acidic residues" evidence="6">
    <location>
        <begin position="12"/>
        <end position="38"/>
    </location>
</feature>
<feature type="modified residue" description="N-acetylmethionine" evidence="9 10 11">
    <location>
        <position position="1"/>
    </location>
</feature>
<feature type="modified residue" description="Phosphoserine" evidence="3">
    <location>
        <position position="45"/>
    </location>
</feature>
<feature type="modified residue" description="Phosphoserine" evidence="4">
    <location>
        <position position="174"/>
    </location>
</feature>
<feature type="modified residue" description="Phosphoserine" evidence="5">
    <location>
        <position position="186"/>
    </location>
</feature>
<feature type="modified residue" description="Phosphoserine" evidence="5">
    <location>
        <position position="206"/>
    </location>
</feature>
<feature type="modified residue" description="Phosphoserine" evidence="5">
    <location>
        <position position="252"/>
    </location>
</feature>
<feature type="modified residue" description="Phosphotyrosine" evidence="3">
    <location>
        <position position="261"/>
    </location>
</feature>
<feature type="modified residue" description="Phosphoserine" evidence="5">
    <location>
        <position position="271"/>
    </location>
</feature>
<feature type="modified residue" description="Phosphoserine; by DAPK1" evidence="8">
    <location>
        <position position="283"/>
    </location>
</feature>
<feature type="helix" evidence="14">
    <location>
        <begin position="2"/>
        <end position="24"/>
    </location>
</feature>
<feature type="helix" evidence="13">
    <location>
        <begin position="176"/>
        <end position="273"/>
    </location>
</feature>
<sequence length="284" mass="32681">MDAIKKKMQMLKLDKENALDRAEQAEADKKAAEDRSKQLEDELVSLQKKLKGTEDELDKYSEALKDAQEKLELAEKKATDAEADVASLNRRIQLVEEELDRAQERLATALQKLEEAEKAADESERGMKVIESRAQKDEEKMEIQEIQLKEAKHIAEDADRKYEEVARKLVIIESDLERAEERAELSEGKCAELEEELKTVTNNLKSLEAQAEKYSQKEDKYEEEIKVLSDKLKEAETRAEFAERSVTKLEKSIDDLEDELYAQKLKYKAISEELDHALNDMTSI</sequence>
<accession>P58772</accession>
<accession>P02558</accession>
<accession>P46902</accession>
<accession>P99034</accession>
<evidence type="ECO:0000250" key="1"/>
<evidence type="ECO:0000250" key="2">
    <source>
        <dbReference type="UniProtKB" id="P04268"/>
    </source>
</evidence>
<evidence type="ECO:0000250" key="3">
    <source>
        <dbReference type="UniProtKB" id="P04692"/>
    </source>
</evidence>
<evidence type="ECO:0000250" key="4">
    <source>
        <dbReference type="UniProtKB" id="P09493"/>
    </source>
</evidence>
<evidence type="ECO:0000250" key="5">
    <source>
        <dbReference type="UniProtKB" id="P58771"/>
    </source>
</evidence>
<evidence type="ECO:0000256" key="6">
    <source>
        <dbReference type="SAM" id="MobiDB-lite"/>
    </source>
</evidence>
<evidence type="ECO:0000269" key="7">
    <source>
    </source>
</evidence>
<evidence type="ECO:0000269" key="8">
    <source>
    </source>
</evidence>
<evidence type="ECO:0000269" key="9">
    <source>
    </source>
</evidence>
<evidence type="ECO:0000269" key="10">
    <source>
    </source>
</evidence>
<evidence type="ECO:0000269" key="11">
    <source>
    </source>
</evidence>
<evidence type="ECO:0000305" key="12"/>
<evidence type="ECO:0007829" key="13">
    <source>
        <dbReference type="PDB" id="2EFR"/>
    </source>
</evidence>
<evidence type="ECO:0007829" key="14">
    <source>
        <dbReference type="PDB" id="2Z5I"/>
    </source>
</evidence>
<gene>
    <name type="primary">TPM1</name>
    <name type="synonym">TPMA</name>
</gene>
<name>TPM1_RABIT</name>
<proteinExistence type="evidence at protein level"/>
<keyword id="KW-0002">3D-structure</keyword>
<keyword id="KW-0007">Acetylation</keyword>
<keyword id="KW-0009">Actin-binding</keyword>
<keyword id="KW-0025">Alternative splicing</keyword>
<keyword id="KW-0175">Coiled coil</keyword>
<keyword id="KW-0963">Cytoplasm</keyword>
<keyword id="KW-0206">Cytoskeleton</keyword>
<keyword id="KW-0903">Direct protein sequencing</keyword>
<keyword id="KW-0514">Muscle protein</keyword>
<keyword id="KW-0597">Phosphoprotein</keyword>
<keyword id="KW-1185">Reference proteome</keyword>
<reference key="1">
    <citation type="journal article" date="1978" name="J. Biol. Chem.">
        <title>The amino acid sequence of rabbit skeletal alpha-tropomyosin. The NH2-terminal half and complete sequence.</title>
        <authorList>
            <person name="Stone D."/>
            <person name="Smillie L.B."/>
        </authorList>
    </citation>
    <scope>PROTEIN SEQUENCE</scope>
    <scope>ACETYLATION AT MET-1</scope>
    <source>
        <tissue>Skeletal muscle</tissue>
    </source>
</reference>
<reference key="2">
    <citation type="journal article" date="1980" name="J. Biol. Chem.">
        <title>The amino acid sequence of rabbit cardiac tropomyosin.</title>
        <authorList>
            <person name="Lewis W.G."/>
            <person name="Smillie L.B."/>
        </authorList>
    </citation>
    <scope>PROTEIN SEQUENCE</scope>
    <scope>ACETYLATION AT MET-1</scope>
    <source>
        <tissue>Heart muscle</tissue>
    </source>
</reference>
<reference key="3">
    <citation type="journal article" date="1995" name="J. Muscle Res. Cell Motil.">
        <title>Rabbit skeletal muscle alpha alpha-tropomyosin expressed in baculovirus-infected insect cells possesses the authentic N-terminus structure and functions.</title>
        <authorList>
            <person name="Kluwe L."/>
            <person name="Maeda K."/>
            <person name="Miegel A."/>
            <person name="Fujita-Becker S."/>
            <person name="Maeda Y."/>
            <person name="Talbo G."/>
            <person name="Houthaeve T."/>
            <person name="Kellner R."/>
        </authorList>
    </citation>
    <scope>NUCLEOTIDE SEQUENCE [MRNA]</scope>
    <scope>ACETYLATION AT MET-1</scope>
    <source>
        <strain>New Zealand white</strain>
        <tissue>Skeletal muscle</tissue>
    </source>
</reference>
<reference key="4">
    <citation type="journal article" date="1983" name="Nature">
        <title>A new troponin T and cDNA clones for 13 different muscle proteins, found by shotgun sequencing.</title>
        <authorList>
            <person name="Putney S.D."/>
            <person name="Herlihy W.C."/>
            <person name="Schimmel P.R."/>
        </authorList>
    </citation>
    <scope>NUCLEOTIDE SEQUENCE [MRNA] OF 103-146</scope>
</reference>
<reference key="5">
    <citation type="journal article" date="1978" name="Proc. Natl. Acad. Sci. U.S.A.">
        <title>Specific phosphorylation at serine-283 of alpha tropomyosin from frog skeletal and rabbit skeletal and cardiac muscle.</title>
        <authorList>
            <person name="Mak A.S."/>
            <person name="Smillie L.B."/>
            <person name="Barany M."/>
        </authorList>
    </citation>
    <scope>PHOSPHORYLATION AT SER-283</scope>
    <source>
        <tissue>Skeletal muscle</tissue>
    </source>
</reference>
<reference key="6">
    <citation type="journal article" date="2013" name="J. Muscle Res. Cell Motil.">
        <title>Polymorphism in tropomyosin structure and function.</title>
        <authorList>
            <person name="Janco M."/>
            <person name="Suphamungmee W."/>
            <person name="Li X."/>
            <person name="Lehman W."/>
            <person name="Lehrer S.S."/>
            <person name="Geeves M.A."/>
        </authorList>
    </citation>
    <scope>SUBUNIT</scope>
</reference>
<reference key="7">
    <citation type="journal article" date="1986" name="J. Mol. Biol.">
        <title>Construction of an atomic model for tropomyosin and implications for interactions with actin.</title>
        <authorList>
            <person name="Phillips G.N. Jr."/>
        </authorList>
    </citation>
    <scope>X-RAY CRYSTALLOGRAPHY (15 ANGSTROMS)</scope>
</reference>
<comment type="function">
    <text evidence="4">Binds to actin filaments in muscle and non-muscle cells. Plays a central role, in association with the troponin complex, in the calcium dependent regulation of vertebrate striated muscle contraction. Smooth muscle contraction is regulated by interaction with caldesmon. In non-muscle cells is implicated in stabilizing cytoskeleton actin filaments.</text>
</comment>
<comment type="subunit">
    <text evidence="2 3 4 7">Homodimer (PubMed:23832280). Heterodimer of an alpha (TPM1, TPM3 or TPM4) and a beta (TPM2) chain (By similarity). Interacts with HRG (via the HRR domain); the interaction contributes to the antiangiogenic properties of the histidine/proline-rich region (HRR) of HRG (By similarity). Interacts (via N-terminus) with LMOD2 (via N-terminus) and TMOD1 (via N-terminus) (By similarity).</text>
</comment>
<comment type="subcellular location">
    <subcellularLocation>
        <location evidence="3">Cytoplasm</location>
        <location evidence="3">Cytoskeleton</location>
    </subcellularLocation>
    <text evidence="3">Associates with F-actin stress fibers.</text>
</comment>
<comment type="alternative products">
    <event type="alternative splicing"/>
    <isoform>
        <id>P58772-1</id>
        <name>1</name>
        <sequence type="displayed"/>
    </isoform>
    <text>A number of isoforms may be produced.</text>
</comment>
<comment type="domain">
    <text>The molecule is in a coiled coil structure that is formed by 2 polypeptide chains. The sequence exhibits a prominent seven-residues periodicity.</text>
</comment>
<comment type="PTM">
    <text evidence="1">Phosphorylated at Ser-283 by DAPK1 in response to oxidative stress and this phosphorylation enhances stress fiber formation in endothelial cells.</text>
</comment>
<comment type="similarity">
    <text evidence="12">Belongs to the tropomyosin family.</text>
</comment>
<protein>
    <recommendedName>
        <fullName>Tropomyosin alpha-1 chain</fullName>
    </recommendedName>
    <alternativeName>
        <fullName>Alpha-tropomyosin</fullName>
    </alternativeName>
    <alternativeName>
        <fullName>Tropomyosin-1</fullName>
    </alternativeName>
</protein>
<organism>
    <name type="scientific">Oryctolagus cuniculus</name>
    <name type="common">Rabbit</name>
    <dbReference type="NCBI Taxonomy" id="9986"/>
    <lineage>
        <taxon>Eukaryota</taxon>
        <taxon>Metazoa</taxon>
        <taxon>Chordata</taxon>
        <taxon>Craniata</taxon>
        <taxon>Vertebrata</taxon>
        <taxon>Euteleostomi</taxon>
        <taxon>Mammalia</taxon>
        <taxon>Eutheria</taxon>
        <taxon>Euarchontoglires</taxon>
        <taxon>Glires</taxon>
        <taxon>Lagomorpha</taxon>
        <taxon>Leporidae</taxon>
        <taxon>Oryctolagus</taxon>
    </lineage>
</organism>
<dbReference type="EMBL" id="S78854">
    <property type="protein sequence ID" value="AAB34957.1"/>
    <property type="molecule type" value="mRNA"/>
</dbReference>
<dbReference type="EMBL" id="V00892">
    <property type="protein sequence ID" value="CAA24257.1"/>
    <property type="molecule type" value="mRNA"/>
</dbReference>
<dbReference type="PIR" id="I47056">
    <property type="entry name" value="TMRBA"/>
</dbReference>
<dbReference type="RefSeq" id="NP_001099158.1">
    <molecule id="P58772-1"/>
    <property type="nucleotide sequence ID" value="NM_001105688.1"/>
</dbReference>
<dbReference type="PDB" id="2D3E">
    <property type="method" value="X-ray"/>
    <property type="resolution" value="2.60 A"/>
    <property type="chains" value="A/B/C/D=176-284"/>
</dbReference>
<dbReference type="PDB" id="2EFR">
    <property type="method" value="X-ray"/>
    <property type="resolution" value="1.80 A"/>
    <property type="chains" value="A/B/C/D=176-273"/>
</dbReference>
<dbReference type="PDB" id="2EFS">
    <property type="method" value="X-ray"/>
    <property type="resolution" value="2.00 A"/>
    <property type="chains" value="A/B/C/D=176-273"/>
</dbReference>
<dbReference type="PDB" id="2TMA">
    <property type="method" value="X-ray"/>
    <property type="resolution" value="15.00 A"/>
    <property type="chains" value="A/B=1-284"/>
</dbReference>
<dbReference type="PDB" id="2W49">
    <property type="method" value="EM"/>
    <property type="resolution" value="35.00 A"/>
    <property type="chains" value="A/B/C/T/U/V/W/X=8-284"/>
</dbReference>
<dbReference type="PDB" id="2W4U">
    <property type="method" value="EM"/>
    <property type="resolution" value="35.00 A"/>
    <property type="chains" value="A/B/C/T/U/V/W/X=8-284"/>
</dbReference>
<dbReference type="PDB" id="2Z5H">
    <property type="method" value="X-ray"/>
    <property type="resolution" value="2.89 A"/>
    <property type="chains" value="A/B/C/D/E/F/G/H=254-284, I=1-24"/>
</dbReference>
<dbReference type="PDB" id="2Z5I">
    <property type="method" value="X-ray"/>
    <property type="resolution" value="2.10 A"/>
    <property type="chains" value="A/B/C/D/E/F/G/H=254-284, I/J=1-24"/>
</dbReference>
<dbReference type="PDB" id="4A7F">
    <property type="method" value="EM"/>
    <property type="resolution" value="7.70 A"/>
    <property type="chains" value="B/H=98-233"/>
</dbReference>
<dbReference type="PDB" id="4A7H">
    <property type="method" value="EM"/>
    <property type="resolution" value="7.80 A"/>
    <property type="chains" value="B/H=98-233"/>
</dbReference>
<dbReference type="PDB" id="4A7L">
    <property type="method" value="EM"/>
    <property type="resolution" value="8.10 A"/>
    <property type="chains" value="B/H=98-233"/>
</dbReference>
<dbReference type="PDBsum" id="2D3E"/>
<dbReference type="PDBsum" id="2EFR"/>
<dbReference type="PDBsum" id="2EFS"/>
<dbReference type="PDBsum" id="2TMA"/>
<dbReference type="PDBsum" id="2W49"/>
<dbReference type="PDBsum" id="2W4U"/>
<dbReference type="PDBsum" id="2Z5H"/>
<dbReference type="PDBsum" id="2Z5I"/>
<dbReference type="PDBsum" id="4A7F"/>
<dbReference type="PDBsum" id="4A7H"/>
<dbReference type="PDBsum" id="4A7L"/>
<dbReference type="EMDB" id="EMD-1987"/>
<dbReference type="EMDB" id="EMD-1988"/>
<dbReference type="EMDB" id="EMD-1989"/>
<dbReference type="SMR" id="P58772"/>
<dbReference type="BioGRID" id="1172720">
    <property type="interactions" value="1"/>
</dbReference>
<dbReference type="DIP" id="DIP-46098N"/>
<dbReference type="FunCoup" id="P58772">
    <property type="interactions" value="222"/>
</dbReference>
<dbReference type="IntAct" id="P58772">
    <property type="interactions" value="3"/>
</dbReference>
<dbReference type="MINT" id="P58772"/>
<dbReference type="STRING" id="9986.ENSOCUP00000012137"/>
<dbReference type="iPTMnet" id="P58772"/>
<dbReference type="PaxDb" id="9986-ENSOCUP00000012137"/>
<dbReference type="GeneID" id="100125989"/>
<dbReference type="KEGG" id="ocu:100125989"/>
<dbReference type="CTD" id="7168"/>
<dbReference type="eggNOG" id="KOG1003">
    <property type="taxonomic scope" value="Eukaryota"/>
</dbReference>
<dbReference type="InParanoid" id="P58772"/>
<dbReference type="OrthoDB" id="128924at2759"/>
<dbReference type="EvolutionaryTrace" id="P58772"/>
<dbReference type="Proteomes" id="UP000001811">
    <property type="component" value="Unplaced"/>
</dbReference>
<dbReference type="GO" id="GO:0015629">
    <property type="term" value="C:actin cytoskeleton"/>
    <property type="evidence" value="ECO:0000250"/>
    <property type="project" value="UniProtKB"/>
</dbReference>
<dbReference type="GO" id="GO:0005884">
    <property type="term" value="C:actin filament"/>
    <property type="evidence" value="ECO:0000315"/>
    <property type="project" value="CAFA"/>
</dbReference>
<dbReference type="GO" id="GO:0005737">
    <property type="term" value="C:cytoplasm"/>
    <property type="evidence" value="ECO:0007669"/>
    <property type="project" value="UniProtKB-KW"/>
</dbReference>
<dbReference type="GO" id="GO:0051015">
    <property type="term" value="F:actin filament binding"/>
    <property type="evidence" value="ECO:0000250"/>
    <property type="project" value="UniProtKB"/>
</dbReference>
<dbReference type="GO" id="GO:0042802">
    <property type="term" value="F:identical protein binding"/>
    <property type="evidence" value="ECO:0000250"/>
    <property type="project" value="UniProtKB"/>
</dbReference>
<dbReference type="GO" id="GO:0046982">
    <property type="term" value="F:protein heterodimerization activity"/>
    <property type="evidence" value="ECO:0000250"/>
    <property type="project" value="UniProtKB"/>
</dbReference>
<dbReference type="GO" id="GO:0042803">
    <property type="term" value="F:protein homodimerization activity"/>
    <property type="evidence" value="ECO:0000250"/>
    <property type="project" value="UniProtKB"/>
</dbReference>
<dbReference type="GO" id="GO:0031013">
    <property type="term" value="F:troponin I binding"/>
    <property type="evidence" value="ECO:0000353"/>
    <property type="project" value="CAFA"/>
</dbReference>
<dbReference type="FunFam" id="1.20.5.1160:FF:000013">
    <property type="entry name" value="Tropomyosin 1 (alpha)"/>
    <property type="match status" value="1"/>
</dbReference>
<dbReference type="FunFam" id="1.20.5.170:FF:000005">
    <property type="entry name" value="Tropomyosin alpha-1 chain"/>
    <property type="match status" value="1"/>
</dbReference>
<dbReference type="FunFam" id="1.20.5.170:FF:000001">
    <property type="entry name" value="Tropomyosin alpha-1 chain isoform 1"/>
    <property type="match status" value="1"/>
</dbReference>
<dbReference type="FunFam" id="1.20.5.340:FF:000001">
    <property type="entry name" value="Tropomyosin alpha-1 chain isoform 2"/>
    <property type="match status" value="1"/>
</dbReference>
<dbReference type="Gene3D" id="1.20.5.170">
    <property type="match status" value="2"/>
</dbReference>
<dbReference type="Gene3D" id="1.20.5.340">
    <property type="match status" value="1"/>
</dbReference>
<dbReference type="InterPro" id="IPR000533">
    <property type="entry name" value="Tropomyosin"/>
</dbReference>
<dbReference type="PANTHER" id="PTHR19269">
    <property type="entry name" value="TROPOMYOSIN"/>
    <property type="match status" value="1"/>
</dbReference>
<dbReference type="Pfam" id="PF00261">
    <property type="entry name" value="Tropomyosin"/>
    <property type="match status" value="1"/>
</dbReference>
<dbReference type="PRINTS" id="PR00194">
    <property type="entry name" value="TROPOMYOSIN"/>
</dbReference>
<dbReference type="SUPFAM" id="SSF57997">
    <property type="entry name" value="Tropomyosin"/>
    <property type="match status" value="1"/>
</dbReference>
<dbReference type="PROSITE" id="PS00326">
    <property type="entry name" value="TROPOMYOSIN"/>
    <property type="match status" value="1"/>
</dbReference>